<organism>
    <name type="scientific">Triticum aestivum</name>
    <name type="common">Wheat</name>
    <dbReference type="NCBI Taxonomy" id="4565"/>
    <lineage>
        <taxon>Eukaryota</taxon>
        <taxon>Viridiplantae</taxon>
        <taxon>Streptophyta</taxon>
        <taxon>Embryophyta</taxon>
        <taxon>Tracheophyta</taxon>
        <taxon>Spermatophyta</taxon>
        <taxon>Magnoliopsida</taxon>
        <taxon>Liliopsida</taxon>
        <taxon>Poales</taxon>
        <taxon>Poaceae</taxon>
        <taxon>BOP clade</taxon>
        <taxon>Pooideae</taxon>
        <taxon>Triticodae</taxon>
        <taxon>Triticeae</taxon>
        <taxon>Triticinae</taxon>
        <taxon>Triticum</taxon>
    </lineage>
</organism>
<geneLocation type="chloroplast"/>
<protein>
    <recommendedName>
        <fullName evidence="2">Large ribosomal subunit protein uL2cz/uL2cy</fullName>
    </recommendedName>
    <alternativeName>
        <fullName evidence="4">50S ribosomal protein L2, chloroplastic</fullName>
    </alternativeName>
</protein>
<evidence type="ECO:0000250" key="1"/>
<evidence type="ECO:0000255" key="2">
    <source>
        <dbReference type="HAMAP-Rule" id="MF_01320"/>
    </source>
</evidence>
<evidence type="ECO:0000256" key="3">
    <source>
        <dbReference type="SAM" id="MobiDB-lite"/>
    </source>
</evidence>
<evidence type="ECO:0000305" key="4"/>
<proteinExistence type="inferred from homology"/>
<keyword id="KW-0150">Chloroplast</keyword>
<keyword id="KW-0934">Plastid</keyword>
<keyword id="KW-1185">Reference proteome</keyword>
<keyword id="KW-0687">Ribonucleoprotein</keyword>
<keyword id="KW-0689">Ribosomal protein</keyword>
<keyword id="KW-0691">RNA editing</keyword>
<feature type="chain" id="PRO_0000129709" description="Large ribosomal subunit protein uL2cz/uL2cy">
    <location>
        <begin position="1"/>
        <end position="273"/>
    </location>
</feature>
<feature type="region of interest" description="Disordered" evidence="3">
    <location>
        <begin position="1"/>
        <end position="25"/>
    </location>
</feature>
<feature type="region of interest" description="Disordered" evidence="3">
    <location>
        <begin position="225"/>
        <end position="253"/>
    </location>
</feature>
<feature type="sequence conflict" description="In Ref. 2; CAA31329." evidence="4" ref="2">
    <original>S</original>
    <variation>Y</variation>
    <location>
        <position position="81"/>
    </location>
</feature>
<reference key="1">
    <citation type="journal article" date="2000" name="Plant Mol. Biol. Rep.">
        <title>Chinese spring wheat (Triticum aestivum L.) chloroplast genome: complete sequence and contig clones.</title>
        <authorList>
            <person name="Ogihara Y."/>
            <person name="Isono K."/>
            <person name="Kojima T."/>
            <person name="Endo A."/>
            <person name="Hanaoka M."/>
            <person name="Shiina T."/>
            <person name="Terachi T."/>
            <person name="Utsugi S."/>
            <person name="Murata M."/>
            <person name="Mori N."/>
            <person name="Takumi S."/>
            <person name="Ikeo K."/>
            <person name="Gojobori T."/>
            <person name="Murai R."/>
            <person name="Murai K."/>
            <person name="Matsuoka Y."/>
            <person name="Ohnishi Y."/>
            <person name="Tajiri H."/>
            <person name="Tsunewaki K."/>
        </authorList>
    </citation>
    <scope>NUCLEOTIDE SEQUENCE [LARGE SCALE GENOMIC DNA]</scope>
    <source>
        <strain>cv. Chinese Spring</strain>
    </source>
</reference>
<reference key="2">
    <citation type="journal article" date="1988" name="Curr. Genet.">
        <title>In wheat ctDNA, segments of ribosomal protein genes are dispersed repeats, probably conserved by nonreciprocal recombination.</title>
        <authorList>
            <person name="Bowman C.M."/>
            <person name="Barker R.F."/>
            <person name="Dyer T.A."/>
        </authorList>
    </citation>
    <scope>NUCLEOTIDE SEQUENCE [GENOMIC DNA] OF 70-116</scope>
</reference>
<gene>
    <name type="primary">rpl2-A</name>
</gene>
<gene>
    <name type="primary">rpl2-B</name>
</gene>
<comment type="subunit">
    <text evidence="1">Part of the 50S ribosomal subunit.</text>
</comment>
<comment type="subcellular location">
    <subcellularLocation>
        <location>Plastid</location>
        <location>Chloroplast</location>
    </subcellularLocation>
</comment>
<comment type="RNA editing">
    <location>
        <position position="1" evidence="1"/>
    </location>
    <text evidence="1">The initiator methionine is created by RNA editing.</text>
</comment>
<comment type="similarity">
    <text evidence="4">Belongs to the universal ribosomal protein uL2 family.</text>
</comment>
<accession>P11534</accession>
<name>RK2_WHEAT</name>
<dbReference type="EMBL" id="AB042240">
    <property type="protein sequence ID" value="BAB47075.1"/>
    <property type="molecule type" value="Genomic_DNA"/>
</dbReference>
<dbReference type="EMBL" id="AB042240">
    <property type="protein sequence ID" value="BAB47096.1"/>
    <property type="molecule type" value="Genomic_DNA"/>
</dbReference>
<dbReference type="EMBL" id="X12851">
    <property type="protein sequence ID" value="CAA31329.1"/>
    <property type="molecule type" value="Genomic_DNA"/>
</dbReference>
<dbReference type="PIR" id="S06027">
    <property type="entry name" value="S06027"/>
</dbReference>
<dbReference type="SMR" id="P11534"/>
<dbReference type="STRING" id="4565.P11534"/>
<dbReference type="PaxDb" id="4565-EPlTAEP00000010032"/>
<dbReference type="KEGG" id="taes:803122"/>
<dbReference type="KEGG" id="taes:803166"/>
<dbReference type="eggNOG" id="KOG0438">
    <property type="taxonomic scope" value="Eukaryota"/>
</dbReference>
<dbReference type="Proteomes" id="UP000019116">
    <property type="component" value="Chloroplast"/>
</dbReference>
<dbReference type="ExpressionAtlas" id="P11534">
    <property type="expression patterns" value="differential"/>
</dbReference>
<dbReference type="GO" id="GO:0009507">
    <property type="term" value="C:chloroplast"/>
    <property type="evidence" value="ECO:0007669"/>
    <property type="project" value="UniProtKB-SubCell"/>
</dbReference>
<dbReference type="GO" id="GO:0005762">
    <property type="term" value="C:mitochondrial large ribosomal subunit"/>
    <property type="evidence" value="ECO:0000318"/>
    <property type="project" value="GO_Central"/>
</dbReference>
<dbReference type="GO" id="GO:0003723">
    <property type="term" value="F:RNA binding"/>
    <property type="evidence" value="ECO:0000318"/>
    <property type="project" value="GO_Central"/>
</dbReference>
<dbReference type="GO" id="GO:0019843">
    <property type="term" value="F:rRNA binding"/>
    <property type="evidence" value="ECO:0007669"/>
    <property type="project" value="UniProtKB-UniRule"/>
</dbReference>
<dbReference type="GO" id="GO:0003735">
    <property type="term" value="F:structural constituent of ribosome"/>
    <property type="evidence" value="ECO:0000318"/>
    <property type="project" value="GO_Central"/>
</dbReference>
<dbReference type="GO" id="GO:0016740">
    <property type="term" value="F:transferase activity"/>
    <property type="evidence" value="ECO:0007669"/>
    <property type="project" value="InterPro"/>
</dbReference>
<dbReference type="GO" id="GO:0032543">
    <property type="term" value="P:mitochondrial translation"/>
    <property type="evidence" value="ECO:0000318"/>
    <property type="project" value="GO_Central"/>
</dbReference>
<dbReference type="FunFam" id="4.10.950.10:FF:000001">
    <property type="entry name" value="50S ribosomal protein L2"/>
    <property type="match status" value="1"/>
</dbReference>
<dbReference type="FunFam" id="2.40.50.140:FF:000029">
    <property type="entry name" value="50S ribosomal protein L2, chloroplastic"/>
    <property type="match status" value="1"/>
</dbReference>
<dbReference type="Gene3D" id="2.30.30.30">
    <property type="match status" value="1"/>
</dbReference>
<dbReference type="Gene3D" id="2.40.50.140">
    <property type="entry name" value="Nucleic acid-binding proteins"/>
    <property type="match status" value="1"/>
</dbReference>
<dbReference type="Gene3D" id="4.10.950.10">
    <property type="entry name" value="Ribosomal protein L2, domain 3"/>
    <property type="match status" value="1"/>
</dbReference>
<dbReference type="HAMAP" id="MF_01320_B">
    <property type="entry name" value="Ribosomal_uL2_B"/>
    <property type="match status" value="1"/>
</dbReference>
<dbReference type="InterPro" id="IPR012340">
    <property type="entry name" value="NA-bd_OB-fold"/>
</dbReference>
<dbReference type="InterPro" id="IPR014722">
    <property type="entry name" value="Rib_uL2_dom2"/>
</dbReference>
<dbReference type="InterPro" id="IPR002171">
    <property type="entry name" value="Ribosomal_uL2"/>
</dbReference>
<dbReference type="InterPro" id="IPR005880">
    <property type="entry name" value="Ribosomal_uL2_bac/org-type"/>
</dbReference>
<dbReference type="InterPro" id="IPR022669">
    <property type="entry name" value="Ribosomal_uL2_C"/>
</dbReference>
<dbReference type="InterPro" id="IPR022671">
    <property type="entry name" value="Ribosomal_uL2_CS"/>
</dbReference>
<dbReference type="InterPro" id="IPR014726">
    <property type="entry name" value="Ribosomal_uL2_dom3"/>
</dbReference>
<dbReference type="InterPro" id="IPR022666">
    <property type="entry name" value="Ribosomal_uL2_RNA-bd_dom"/>
</dbReference>
<dbReference type="InterPro" id="IPR008991">
    <property type="entry name" value="Translation_prot_SH3-like_sf"/>
</dbReference>
<dbReference type="NCBIfam" id="TIGR01171">
    <property type="entry name" value="rplB_bact"/>
    <property type="match status" value="1"/>
</dbReference>
<dbReference type="PANTHER" id="PTHR13691:SF57">
    <property type="entry name" value="LARGE RIBOSOMAL SUBUNIT PROTEIN UL2CZ_UL2CY"/>
    <property type="match status" value="1"/>
</dbReference>
<dbReference type="PANTHER" id="PTHR13691">
    <property type="entry name" value="RIBOSOMAL PROTEIN L2"/>
    <property type="match status" value="1"/>
</dbReference>
<dbReference type="Pfam" id="PF00181">
    <property type="entry name" value="Ribosomal_L2"/>
    <property type="match status" value="1"/>
</dbReference>
<dbReference type="Pfam" id="PF03947">
    <property type="entry name" value="Ribosomal_L2_C"/>
    <property type="match status" value="1"/>
</dbReference>
<dbReference type="PIRSF" id="PIRSF002158">
    <property type="entry name" value="Ribosomal_L2"/>
    <property type="match status" value="1"/>
</dbReference>
<dbReference type="SMART" id="SM01383">
    <property type="entry name" value="Ribosomal_L2"/>
    <property type="match status" value="1"/>
</dbReference>
<dbReference type="SMART" id="SM01382">
    <property type="entry name" value="Ribosomal_L2_C"/>
    <property type="match status" value="1"/>
</dbReference>
<dbReference type="SUPFAM" id="SSF50249">
    <property type="entry name" value="Nucleic acid-binding proteins"/>
    <property type="match status" value="1"/>
</dbReference>
<dbReference type="SUPFAM" id="SSF50104">
    <property type="entry name" value="Translation proteins SH3-like domain"/>
    <property type="match status" value="1"/>
</dbReference>
<dbReference type="PROSITE" id="PS00467">
    <property type="entry name" value="RIBOSOMAL_L2"/>
    <property type="match status" value="1"/>
</dbReference>
<sequence>MAKHLYKTPIPSTRKGTLDRQVKSNPRNNLIHGRHRCGKGRNSRGIITASIEGEVIKRLYRKIDFRRNQKDISGRIVTIESDPNRNAYICLIHYGDGEKRYILHPRGAIIGDTIVSGTKVPISMGNALPLTDMPLGTVMHNKENTRGRGGQLARAAGAVAKHKAKEGKMATLRLPSGEGRIVTQNSLATVGQEGKVGVNQKSLGRAGSKCWLGKRPVVRGVVMNPVDHPHGGGEGKAPIGRKKPTTPWGYPALGRRTRKRKKYSDSFILRRRK</sequence>